<organism>
    <name type="scientific">Triticum aestivum</name>
    <name type="common">Wheat</name>
    <dbReference type="NCBI Taxonomy" id="4565"/>
    <lineage>
        <taxon>Eukaryota</taxon>
        <taxon>Viridiplantae</taxon>
        <taxon>Streptophyta</taxon>
        <taxon>Embryophyta</taxon>
        <taxon>Tracheophyta</taxon>
        <taxon>Spermatophyta</taxon>
        <taxon>Magnoliopsida</taxon>
        <taxon>Liliopsida</taxon>
        <taxon>Poales</taxon>
        <taxon>Poaceae</taxon>
        <taxon>BOP clade</taxon>
        <taxon>Pooideae</taxon>
        <taxon>Triticodae</taxon>
        <taxon>Triticeae</taxon>
        <taxon>Triticinae</taxon>
        <taxon>Triticum</taxon>
    </lineage>
</organism>
<reference key="1">
    <citation type="journal article" date="1991" name="Nucleic Acids Res.">
        <title>Molecular cloning and nucleotide sequences of cDNAs for histone H1 and H2B variants from wheat.</title>
        <authorList>
            <person name="Yang P."/>
            <person name="Katsura M."/>
            <person name="Nakayama T."/>
            <person name="Mikami K."/>
            <person name="Iwabuchi M."/>
        </authorList>
    </citation>
    <scope>NUCLEOTIDE SEQUENCE [MRNA]</scope>
    <source>
        <strain>cv. Horoshirikomugi</strain>
        <tissue>Seedling</tissue>
    </source>
</reference>
<reference key="2">
    <citation type="journal article" date="1990" name="Plant Physiol.">
        <title>Phosphorylation of plant H2A histones.</title>
        <authorList>
            <person name="Green G.R."/>
            <person name="Gustavsen L.C."/>
            <person name="Poccia D.L."/>
        </authorList>
    </citation>
    <scope>LACK OF PHOSPHORYLATION</scope>
</reference>
<accession>P27807</accession>
<sequence>MAPKAEKKPAAKKPAEEEPAAEKAEKTPAGKKPKAEKRLPAGKSAAKEGGDKKGKKKAKKSVETYKIYIFKVLKQVHPDIGISSKAMSIMNSFINDIFEKLAGEAAKLARYNKKPTITSREIQTSVRLVLPGELAKHAVSEGTKAVTKFTSS</sequence>
<dbReference type="EMBL" id="X59873">
    <property type="protein sequence ID" value="CAA42530.1"/>
    <property type="molecule type" value="mRNA"/>
</dbReference>
<dbReference type="PIR" id="S22323">
    <property type="entry name" value="S22323"/>
</dbReference>
<dbReference type="RefSeq" id="NP_001392756.1">
    <property type="nucleotide sequence ID" value="NM_001405827.1"/>
</dbReference>
<dbReference type="RefSeq" id="XP_044373447.1">
    <property type="nucleotide sequence ID" value="XM_044517512.1"/>
</dbReference>
<dbReference type="SMR" id="P27807"/>
<dbReference type="STRING" id="4565.P27807"/>
<dbReference type="PaxDb" id="4565-Traes_4AL_948151631.1"/>
<dbReference type="EnsemblPlants" id="TraesARI4A03G02173040.1">
    <property type="protein sequence ID" value="TraesARI4A03G02173040.1.CDS1"/>
    <property type="gene ID" value="TraesARI4A03G02173040"/>
</dbReference>
<dbReference type="EnsemblPlants" id="TraesARI4D03G02466780.1">
    <property type="protein sequence ID" value="TraesARI4D03G02466780.1.CDS1"/>
    <property type="gene ID" value="TraesARI4D03G02466780"/>
</dbReference>
<dbReference type="EnsemblPlants" id="TraesCAD_scaffold_029575_01G000400.1">
    <property type="protein sequence ID" value="TraesCAD_scaffold_029575_01G000400.1"/>
    <property type="gene ID" value="TraesCAD_scaffold_029575_01G000400"/>
</dbReference>
<dbReference type="EnsemblPlants" id="TraesCAD_scaffold_075776_01G000500.1">
    <property type="protein sequence ID" value="TraesCAD_scaffold_075776_01G000500.1"/>
    <property type="gene ID" value="TraesCAD_scaffold_075776_01G000500"/>
</dbReference>
<dbReference type="EnsemblPlants" id="TraesCLE_scaffold_051194_01G000500.1">
    <property type="protein sequence ID" value="TraesCLE_scaffold_051194_01G000500.1"/>
    <property type="gene ID" value="TraesCLE_scaffold_051194_01G000500"/>
</dbReference>
<dbReference type="EnsemblPlants" id="TraesCLE_scaffold_057438_01G000200.1">
    <property type="protein sequence ID" value="TraesCLE_scaffold_057438_01G000200.1"/>
    <property type="gene ID" value="TraesCLE_scaffold_057438_01G000200"/>
</dbReference>
<dbReference type="EnsemblPlants" id="TraesCS4A02G260400.1">
    <property type="protein sequence ID" value="TraesCS4A02G260400.1.cds1"/>
    <property type="gene ID" value="TraesCS4A02G260400"/>
</dbReference>
<dbReference type="EnsemblPlants" id="TraesCS4A03G0678100.1">
    <property type="protein sequence ID" value="TraesCS4A03G0678100.1.CDS1"/>
    <property type="gene ID" value="TraesCS4A03G0678100"/>
</dbReference>
<dbReference type="EnsemblPlants" id="TraesCS4D02G054200.1">
    <property type="protein sequence ID" value="TraesCS4D02G054200.1.cds1"/>
    <property type="gene ID" value="TraesCS4D02G054200"/>
</dbReference>
<dbReference type="EnsemblPlants" id="TraesCS4D03G0099200.1">
    <property type="protein sequence ID" value="TraesCS4D03G0099200.1.CDS1"/>
    <property type="gene ID" value="TraesCS4D03G0099200"/>
</dbReference>
<dbReference type="EnsemblPlants" id="TraesJAG4D03G02425470.1">
    <property type="protein sequence ID" value="TraesJAG4D03G02425470.1.CDS1"/>
    <property type="gene ID" value="TraesJAG4D03G02425470"/>
</dbReference>
<dbReference type="EnsemblPlants" id="TraesJUL4A03G02154690.1">
    <property type="protein sequence ID" value="TraesJUL4A03G02154690.1.CDS1"/>
    <property type="gene ID" value="TraesJUL4A03G02154690"/>
</dbReference>
<dbReference type="EnsemblPlants" id="TraesJUL4D03G02447080.1">
    <property type="protein sequence ID" value="TraesJUL4D03G02447080.1.CDS1"/>
    <property type="gene ID" value="TraesJUL4D03G02447080"/>
</dbReference>
<dbReference type="EnsemblPlants" id="TraesKAR4A01G0350440.1">
    <property type="protein sequence ID" value="cds.TraesKAR4A01G0350440.1"/>
    <property type="gene ID" value="TraesKAR4A01G0350440"/>
</dbReference>
<dbReference type="EnsemblPlants" id="TraesKAR4D01G0023790.1">
    <property type="protein sequence ID" value="cds.TraesKAR4D01G0023790.1"/>
    <property type="gene ID" value="TraesKAR4D01G0023790"/>
</dbReference>
<dbReference type="EnsemblPlants" id="TraesLAC4A03G02089030.1">
    <property type="protein sequence ID" value="TraesLAC4A03G02089030.1.CDS1"/>
    <property type="gene ID" value="TraesLAC4A03G02089030"/>
</dbReference>
<dbReference type="EnsemblPlants" id="TraesLAC4D03G02381590.1">
    <property type="protein sequence ID" value="TraesLAC4D03G02381590.1.CDS1"/>
    <property type="gene ID" value="TraesLAC4D03G02381590"/>
</dbReference>
<dbReference type="EnsemblPlants" id="TraesLDM4A03G02134060.1">
    <property type="protein sequence ID" value="TraesLDM4A03G02134060.1.CDS1"/>
    <property type="gene ID" value="TraesLDM4A03G02134060"/>
</dbReference>
<dbReference type="EnsemblPlants" id="TraesLDM4D03G02430270.1">
    <property type="protein sequence ID" value="TraesLDM4D03G02430270.1.CDS1"/>
    <property type="gene ID" value="TraesLDM4D03G02430270"/>
</dbReference>
<dbReference type="EnsemblPlants" id="TraesMAC4A03G02134650.1">
    <property type="protein sequence ID" value="TraesMAC4A03G02134650.1.CDS1"/>
    <property type="gene ID" value="TraesMAC4A03G02134650"/>
</dbReference>
<dbReference type="EnsemblPlants" id="TraesMAC4D03G02426430.1">
    <property type="protein sequence ID" value="TraesMAC4D03G02426430.1.CDS1"/>
    <property type="gene ID" value="TraesMAC4D03G02426430"/>
</dbReference>
<dbReference type="EnsemblPlants" id="TraesNOR4A03G02157690.1">
    <property type="protein sequence ID" value="TraesNOR4A03G02157690.1.CDS1"/>
    <property type="gene ID" value="TraesNOR4A03G02157690"/>
</dbReference>
<dbReference type="EnsemblPlants" id="TraesNOR4D03G02446240.1">
    <property type="protein sequence ID" value="TraesNOR4D03G02446240.1.CDS1"/>
    <property type="gene ID" value="TraesNOR4D03G02446240"/>
</dbReference>
<dbReference type="EnsemblPlants" id="TraesPARA_EIv1.0_1242930.1">
    <property type="protein sequence ID" value="TraesPARA_EIv1.0_1242930.1.CDS1"/>
    <property type="gene ID" value="TraesPARA_EIv1.0_1242930"/>
</dbReference>
<dbReference type="EnsemblPlants" id="TraesPARA_EIv1.0_1418240.1">
    <property type="protein sequence ID" value="TraesPARA_EIv1.0_1418240.1.CDS1"/>
    <property type="gene ID" value="TraesPARA_EIv1.0_1418240"/>
</dbReference>
<dbReference type="EnsemblPlants" id="TraesRN4A0100696100.1">
    <property type="protein sequence ID" value="TraesRN4A0100696100.1"/>
    <property type="gene ID" value="TraesRN4A0100696100"/>
</dbReference>
<dbReference type="EnsemblPlants" id="TraesROB_scaffold_057369_01G000300.1">
    <property type="protein sequence ID" value="TraesROB_scaffold_057369_01G000300.1"/>
    <property type="gene ID" value="TraesROB_scaffold_057369_01G000300"/>
</dbReference>
<dbReference type="EnsemblPlants" id="TraesROB_scaffold_063112_01G000500.1">
    <property type="protein sequence ID" value="TraesROB_scaffold_063112_01G000500.1"/>
    <property type="gene ID" value="TraesROB_scaffold_063112_01G000500"/>
</dbReference>
<dbReference type="EnsemblPlants" id="TraesSTA4A03G02132040.1">
    <property type="protein sequence ID" value="TraesSTA4A03G02132040.1.CDS1"/>
    <property type="gene ID" value="TraesSTA4A03G02132040"/>
</dbReference>
<dbReference type="EnsemblPlants" id="TraesSTA4D03G02423420.1">
    <property type="protein sequence ID" value="TraesSTA4D03G02423420.1.CDS1"/>
    <property type="gene ID" value="TraesSTA4D03G02423420"/>
</dbReference>
<dbReference type="EnsemblPlants" id="TraesSYM4A03G02163040.1">
    <property type="protein sequence ID" value="TraesSYM4A03G02163040.1.CDS1"/>
    <property type="gene ID" value="TraesSYM4A03G02163040"/>
</dbReference>
<dbReference type="EnsemblPlants" id="TraesSYM4D03G02455360.1">
    <property type="protein sequence ID" value="TraesSYM4D03G02455360.1.CDS1"/>
    <property type="gene ID" value="TraesSYM4D03G02455360"/>
</dbReference>
<dbReference type="EnsemblPlants" id="TraesWEE_scaffold_026722_01G000500.1">
    <property type="protein sequence ID" value="TraesWEE_scaffold_026722_01G000500.1"/>
    <property type="gene ID" value="TraesWEE_scaffold_026722_01G000500"/>
</dbReference>
<dbReference type="EnsemblPlants" id="TraesWEE_scaffold_058384_01G000500.1">
    <property type="protein sequence ID" value="TraesWEE_scaffold_058384_01G000500.1"/>
    <property type="gene ID" value="TraesWEE_scaffold_058384_01G000500"/>
</dbReference>
<dbReference type="GeneID" id="123095942"/>
<dbReference type="GeneID" id="543489"/>
<dbReference type="Gramene" id="TraesARI4A03G02173040.1">
    <property type="protein sequence ID" value="TraesARI4A03G02173040.1.CDS1"/>
    <property type="gene ID" value="TraesARI4A03G02173040"/>
</dbReference>
<dbReference type="Gramene" id="TraesARI4D03G02466780.1">
    <property type="protein sequence ID" value="TraesARI4D03G02466780.1.CDS1"/>
    <property type="gene ID" value="TraesARI4D03G02466780"/>
</dbReference>
<dbReference type="Gramene" id="TraesCAD_scaffold_029575_01G000400.1">
    <property type="protein sequence ID" value="TraesCAD_scaffold_029575_01G000400.1"/>
    <property type="gene ID" value="TraesCAD_scaffold_029575_01G000400"/>
</dbReference>
<dbReference type="Gramene" id="TraesCAD_scaffold_075776_01G000500.1">
    <property type="protein sequence ID" value="TraesCAD_scaffold_075776_01G000500.1"/>
    <property type="gene ID" value="TraesCAD_scaffold_075776_01G000500"/>
</dbReference>
<dbReference type="Gramene" id="TraesCLE_scaffold_051194_01G000500.1">
    <property type="protein sequence ID" value="TraesCLE_scaffold_051194_01G000500.1"/>
    <property type="gene ID" value="TraesCLE_scaffold_051194_01G000500"/>
</dbReference>
<dbReference type="Gramene" id="TraesCLE_scaffold_057438_01G000200.1">
    <property type="protein sequence ID" value="TraesCLE_scaffold_057438_01G000200.1"/>
    <property type="gene ID" value="TraesCLE_scaffold_057438_01G000200"/>
</dbReference>
<dbReference type="Gramene" id="TraesCS4A02G260400.1">
    <property type="protein sequence ID" value="TraesCS4A02G260400.1.cds1"/>
    <property type="gene ID" value="TraesCS4A02G260400"/>
</dbReference>
<dbReference type="Gramene" id="TraesCS4A03G0678100.1">
    <property type="protein sequence ID" value="TraesCS4A03G0678100.1.CDS1"/>
    <property type="gene ID" value="TraesCS4A03G0678100"/>
</dbReference>
<dbReference type="Gramene" id="TraesCS4D02G054200.1">
    <property type="protein sequence ID" value="TraesCS4D02G054200.1.cds1"/>
    <property type="gene ID" value="TraesCS4D02G054200"/>
</dbReference>
<dbReference type="Gramene" id="TraesCS4D03G0099200.1">
    <property type="protein sequence ID" value="TraesCS4D03G0099200.1.CDS1"/>
    <property type="gene ID" value="TraesCS4D03G0099200"/>
</dbReference>
<dbReference type="Gramene" id="TraesJAG4D03G02425470.1">
    <property type="protein sequence ID" value="TraesJAG4D03G02425470.1.CDS1"/>
    <property type="gene ID" value="TraesJAG4D03G02425470"/>
</dbReference>
<dbReference type="Gramene" id="TraesJUL4A03G02154690.1">
    <property type="protein sequence ID" value="TraesJUL4A03G02154690.1.CDS1"/>
    <property type="gene ID" value="TraesJUL4A03G02154690"/>
</dbReference>
<dbReference type="Gramene" id="TraesJUL4D03G02447080.1">
    <property type="protein sequence ID" value="TraesJUL4D03G02447080.1.CDS1"/>
    <property type="gene ID" value="TraesJUL4D03G02447080"/>
</dbReference>
<dbReference type="Gramene" id="TraesKAR4A01G0350440.1">
    <property type="protein sequence ID" value="cds.TraesKAR4A01G0350440.1"/>
    <property type="gene ID" value="TraesKAR4A01G0350440"/>
</dbReference>
<dbReference type="Gramene" id="TraesKAR4D01G0023790.1">
    <property type="protein sequence ID" value="cds.TraesKAR4D01G0023790.1"/>
    <property type="gene ID" value="TraesKAR4D01G0023790"/>
</dbReference>
<dbReference type="Gramene" id="TraesLAC4A03G02089030.1">
    <property type="protein sequence ID" value="TraesLAC4A03G02089030.1.CDS1"/>
    <property type="gene ID" value="TraesLAC4A03G02089030"/>
</dbReference>
<dbReference type="Gramene" id="TraesLAC4D03G02381590.1">
    <property type="protein sequence ID" value="TraesLAC4D03G02381590.1.CDS1"/>
    <property type="gene ID" value="TraesLAC4D03G02381590"/>
</dbReference>
<dbReference type="Gramene" id="TraesLDM4A03G02134060.1">
    <property type="protein sequence ID" value="TraesLDM4A03G02134060.1.CDS1"/>
    <property type="gene ID" value="TraesLDM4A03G02134060"/>
</dbReference>
<dbReference type="Gramene" id="TraesLDM4D03G02430270.1">
    <property type="protein sequence ID" value="TraesLDM4D03G02430270.1.CDS1"/>
    <property type="gene ID" value="TraesLDM4D03G02430270"/>
</dbReference>
<dbReference type="Gramene" id="TraesMAC4A03G02134650.1">
    <property type="protein sequence ID" value="TraesMAC4A03G02134650.1.CDS1"/>
    <property type="gene ID" value="TraesMAC4A03G02134650"/>
</dbReference>
<dbReference type="Gramene" id="TraesMAC4D03G02426430.1">
    <property type="protein sequence ID" value="TraesMAC4D03G02426430.1.CDS1"/>
    <property type="gene ID" value="TraesMAC4D03G02426430"/>
</dbReference>
<dbReference type="Gramene" id="TraesNOR4A03G02157690.1">
    <property type="protein sequence ID" value="TraesNOR4A03G02157690.1.CDS1"/>
    <property type="gene ID" value="TraesNOR4A03G02157690"/>
</dbReference>
<dbReference type="Gramene" id="TraesNOR4D03G02446240.1">
    <property type="protein sequence ID" value="TraesNOR4D03G02446240.1.CDS1"/>
    <property type="gene ID" value="TraesNOR4D03G02446240"/>
</dbReference>
<dbReference type="Gramene" id="TraesPARA_EIv1.0_1242930.1">
    <property type="protein sequence ID" value="TraesPARA_EIv1.0_1242930.1.CDS1"/>
    <property type="gene ID" value="TraesPARA_EIv1.0_1242930"/>
</dbReference>
<dbReference type="Gramene" id="TraesPARA_EIv1.0_1418240.1">
    <property type="protein sequence ID" value="TraesPARA_EIv1.0_1418240.1.CDS1"/>
    <property type="gene ID" value="TraesPARA_EIv1.0_1418240"/>
</dbReference>
<dbReference type="Gramene" id="TraesRN4A0100696100.1">
    <property type="protein sequence ID" value="TraesRN4A0100696100.1"/>
    <property type="gene ID" value="TraesRN4A0100696100"/>
</dbReference>
<dbReference type="Gramene" id="TraesROB_scaffold_057369_01G000300.1">
    <property type="protein sequence ID" value="TraesROB_scaffold_057369_01G000300.1"/>
    <property type="gene ID" value="TraesROB_scaffold_057369_01G000300"/>
</dbReference>
<dbReference type="Gramene" id="TraesROB_scaffold_063112_01G000500.1">
    <property type="protein sequence ID" value="TraesROB_scaffold_063112_01G000500.1"/>
    <property type="gene ID" value="TraesROB_scaffold_063112_01G000500"/>
</dbReference>
<dbReference type="Gramene" id="TraesSTA4A03G02132040.1">
    <property type="protein sequence ID" value="TraesSTA4A03G02132040.1.CDS1"/>
    <property type="gene ID" value="TraesSTA4A03G02132040"/>
</dbReference>
<dbReference type="Gramene" id="TraesSTA4D03G02423420.1">
    <property type="protein sequence ID" value="TraesSTA4D03G02423420.1.CDS1"/>
    <property type="gene ID" value="TraesSTA4D03G02423420"/>
</dbReference>
<dbReference type="Gramene" id="TraesSYM4A03G02163040.1">
    <property type="protein sequence ID" value="TraesSYM4A03G02163040.1.CDS1"/>
    <property type="gene ID" value="TraesSYM4A03G02163040"/>
</dbReference>
<dbReference type="Gramene" id="TraesSYM4D03G02455360.1">
    <property type="protein sequence ID" value="TraesSYM4D03G02455360.1.CDS1"/>
    <property type="gene ID" value="TraesSYM4D03G02455360"/>
</dbReference>
<dbReference type="Gramene" id="TraesWEE_scaffold_026722_01G000500.1">
    <property type="protein sequence ID" value="TraesWEE_scaffold_026722_01G000500.1"/>
    <property type="gene ID" value="TraesWEE_scaffold_026722_01G000500"/>
</dbReference>
<dbReference type="Gramene" id="TraesWEE_scaffold_058384_01G000500.1">
    <property type="protein sequence ID" value="TraesWEE_scaffold_058384_01G000500.1"/>
    <property type="gene ID" value="TraesWEE_scaffold_058384_01G000500"/>
</dbReference>
<dbReference type="eggNOG" id="KOG1744">
    <property type="taxonomic scope" value="Eukaryota"/>
</dbReference>
<dbReference type="HOGENOM" id="CLU_075666_1_0_1"/>
<dbReference type="OMA" id="ELAKHAX"/>
<dbReference type="OrthoDB" id="1914959at2759"/>
<dbReference type="Proteomes" id="UP000019116">
    <property type="component" value="Chromosome 4A"/>
</dbReference>
<dbReference type="Proteomes" id="UP000019116">
    <property type="component" value="Chromosome 4D"/>
</dbReference>
<dbReference type="ExpressionAtlas" id="P27807">
    <property type="expression patterns" value="baseline and differential"/>
</dbReference>
<dbReference type="GO" id="GO:0000786">
    <property type="term" value="C:nucleosome"/>
    <property type="evidence" value="ECO:0007669"/>
    <property type="project" value="UniProtKB-KW"/>
</dbReference>
<dbReference type="GO" id="GO:0005634">
    <property type="term" value="C:nucleus"/>
    <property type="evidence" value="ECO:0007669"/>
    <property type="project" value="UniProtKB-SubCell"/>
</dbReference>
<dbReference type="GO" id="GO:0003677">
    <property type="term" value="F:DNA binding"/>
    <property type="evidence" value="ECO:0000318"/>
    <property type="project" value="GO_Central"/>
</dbReference>
<dbReference type="GO" id="GO:0046982">
    <property type="term" value="F:protein heterodimerization activity"/>
    <property type="evidence" value="ECO:0007669"/>
    <property type="project" value="InterPro"/>
</dbReference>
<dbReference type="GO" id="GO:0030527">
    <property type="term" value="F:structural constituent of chromatin"/>
    <property type="evidence" value="ECO:0007669"/>
    <property type="project" value="InterPro"/>
</dbReference>
<dbReference type="CDD" id="cd22910">
    <property type="entry name" value="HFD_H2B"/>
    <property type="match status" value="1"/>
</dbReference>
<dbReference type="FunFam" id="1.10.20.10:FF:000014">
    <property type="entry name" value="Histone H2B"/>
    <property type="match status" value="1"/>
</dbReference>
<dbReference type="Gene3D" id="1.10.20.10">
    <property type="entry name" value="Histone, subunit A"/>
    <property type="match status" value="1"/>
</dbReference>
<dbReference type="InterPro" id="IPR009072">
    <property type="entry name" value="Histone-fold"/>
</dbReference>
<dbReference type="InterPro" id="IPR007125">
    <property type="entry name" value="Histone_H2A/H2B/H3"/>
</dbReference>
<dbReference type="InterPro" id="IPR000558">
    <property type="entry name" value="Histone_H2B"/>
</dbReference>
<dbReference type="InterPro" id="IPR055333">
    <property type="entry name" value="HISTONE_H2B_site"/>
</dbReference>
<dbReference type="PANTHER" id="PTHR23428">
    <property type="entry name" value="HISTONE H2B"/>
    <property type="match status" value="1"/>
</dbReference>
<dbReference type="Pfam" id="PF00125">
    <property type="entry name" value="Histone"/>
    <property type="match status" value="1"/>
</dbReference>
<dbReference type="PRINTS" id="PR00621">
    <property type="entry name" value="HISTONEH2B"/>
</dbReference>
<dbReference type="SMART" id="SM00427">
    <property type="entry name" value="H2B"/>
    <property type="match status" value="1"/>
</dbReference>
<dbReference type="SUPFAM" id="SSF47113">
    <property type="entry name" value="Histone-fold"/>
    <property type="match status" value="1"/>
</dbReference>
<dbReference type="PROSITE" id="PS00357">
    <property type="entry name" value="HISTONE_H2B"/>
    <property type="match status" value="1"/>
</dbReference>
<protein>
    <recommendedName>
        <fullName>Histone H2B.1</fullName>
    </recommendedName>
</protein>
<evidence type="ECO:0000250" key="1"/>
<evidence type="ECO:0000256" key="2">
    <source>
        <dbReference type="SAM" id="MobiDB-lite"/>
    </source>
</evidence>
<evidence type="ECO:0000305" key="3"/>
<comment type="function">
    <text>Core component of nucleosome. Nucleosomes wrap and compact DNA into chromatin, limiting DNA accessibility to the cellular machineries which require DNA as a template. Histones thereby play a central role in transcription regulation, DNA repair, DNA replication and chromosomal stability. DNA accessibility is regulated via a complex set of post-translational modifications of histones, also called histone code, and nucleosome remodeling.</text>
</comment>
<comment type="subunit">
    <text>The nucleosome is a histone octamer containing two molecules each of H2A, H2B, H3 and H4 assembled in one H3-H4 heterotetramer and two H2A-H2B heterodimers. The octamer wraps approximately 147 bp of DNA.</text>
</comment>
<comment type="subcellular location">
    <subcellularLocation>
        <location>Nucleus</location>
    </subcellularLocation>
    <subcellularLocation>
        <location>Chromosome</location>
    </subcellularLocation>
</comment>
<comment type="PTM">
    <text evidence="1">Can be acetylated to form H2BK6ac and H2BK33ac.</text>
</comment>
<comment type="PTM">
    <text evidence="1">Monoubiquitinated to form H2BK143ub1; may give a specific tag for epigenetic transcriptional activation.</text>
</comment>
<comment type="miscellaneous">
    <text>Phosphorylation of H2B was not detected.</text>
</comment>
<comment type="similarity">
    <text evidence="3">Belongs to the histone H2B family.</text>
</comment>
<comment type="caution">
    <text evidence="3">To ensure consistency between histone entries, we follow the 'Brno' nomenclature for histone modifications, with positions referring to those used in the literature for the 'closest' model organism. Due to slight variations in histone sequences between organisms and to the presence of initiator methionine in UniProtKB/Swiss-Prot sequences, the actual positions of modified amino acids in the sequence generally differ. In this entry the following conventions are used: H2BK6ac = acetylated Lys-7; H2BK33ac = acetylated Lys-37; H2BK143ub1 = monoubiquitinated Lys-148.</text>
</comment>
<proteinExistence type="evidence at protein level"/>
<feature type="initiator methionine" description="Removed" evidence="1">
    <location>
        <position position="1"/>
    </location>
</feature>
<feature type="chain" id="PRO_0000071924" description="Histone H2B.1">
    <location>
        <begin position="2"/>
        <end position="152"/>
    </location>
</feature>
<feature type="region of interest" description="Disordered" evidence="2">
    <location>
        <begin position="1"/>
        <end position="60"/>
    </location>
</feature>
<feature type="compositionally biased region" description="Basic and acidic residues" evidence="2">
    <location>
        <begin position="1"/>
        <end position="28"/>
    </location>
</feature>
<feature type="modified residue" description="N6-acetyllysine" evidence="1">
    <location>
        <position position="7"/>
    </location>
</feature>
<feature type="modified residue" description="N6-acetyllysine" evidence="1">
    <location>
        <position position="37"/>
    </location>
</feature>
<feature type="cross-link" description="Glycyl lysine isopeptide (Lys-Gly) (interchain with G-Cter in ubiquitin)" evidence="1">
    <location>
        <position position="148"/>
    </location>
</feature>
<keyword id="KW-0007">Acetylation</keyword>
<keyword id="KW-0158">Chromosome</keyword>
<keyword id="KW-0238">DNA-binding</keyword>
<keyword id="KW-1017">Isopeptide bond</keyword>
<keyword id="KW-0544">Nucleosome core</keyword>
<keyword id="KW-0539">Nucleus</keyword>
<keyword id="KW-1185">Reference proteome</keyword>
<keyword id="KW-0832">Ubl conjugation</keyword>
<name>H2B1_WHEAT</name>